<protein>
    <recommendedName>
        <fullName evidence="1">Protein AaeX</fullName>
    </recommendedName>
</protein>
<sequence>MSLFPVIVVFGLSFPPIFFELLLSLAIFWLVRRVLVPTGIYDFVWHPALFNTALYCCLFYLISRLFV</sequence>
<feature type="chain" id="PRO_0000215050" description="Protein AaeX">
    <location>
        <begin position="1"/>
        <end position="67"/>
    </location>
</feature>
<feature type="transmembrane region" description="Helical" evidence="1">
    <location>
        <begin position="3"/>
        <end position="23"/>
    </location>
</feature>
<feature type="transmembrane region" description="Helical" evidence="1">
    <location>
        <begin position="43"/>
        <end position="63"/>
    </location>
</feature>
<keyword id="KW-1003">Cell membrane</keyword>
<keyword id="KW-0472">Membrane</keyword>
<keyword id="KW-1185">Reference proteome</keyword>
<keyword id="KW-0812">Transmembrane</keyword>
<keyword id="KW-1133">Transmembrane helix</keyword>
<accession>Q8FD49</accession>
<reference key="1">
    <citation type="journal article" date="2002" name="Proc. Natl. Acad. Sci. U.S.A.">
        <title>Extensive mosaic structure revealed by the complete genome sequence of uropathogenic Escherichia coli.</title>
        <authorList>
            <person name="Welch R.A."/>
            <person name="Burland V."/>
            <person name="Plunkett G. III"/>
            <person name="Redford P."/>
            <person name="Roesch P."/>
            <person name="Rasko D."/>
            <person name="Buckles E.L."/>
            <person name="Liou S.-R."/>
            <person name="Boutin A."/>
            <person name="Hackett J."/>
            <person name="Stroud D."/>
            <person name="Mayhew G.F."/>
            <person name="Rose D.J."/>
            <person name="Zhou S."/>
            <person name="Schwartz D.C."/>
            <person name="Perna N.T."/>
            <person name="Mobley H.L.T."/>
            <person name="Donnenberg M.S."/>
            <person name="Blattner F.R."/>
        </authorList>
    </citation>
    <scope>NUCLEOTIDE SEQUENCE [LARGE SCALE GENOMIC DNA]</scope>
    <source>
        <strain>CFT073 / ATCC 700928 / UPEC</strain>
    </source>
</reference>
<evidence type="ECO:0000255" key="1">
    <source>
        <dbReference type="HAMAP-Rule" id="MF_01546"/>
    </source>
</evidence>
<evidence type="ECO:0000305" key="2"/>
<comment type="subcellular location">
    <subcellularLocation>
        <location evidence="1">Cell membrane</location>
        <topology evidence="1">Multi-pass membrane protein</topology>
    </subcellularLocation>
</comment>
<comment type="induction">
    <text evidence="1">Positively coregulated with aaeA and aaeB by AaeR.</text>
</comment>
<comment type="similarity">
    <text evidence="1">Belongs to the AaeX family.</text>
</comment>
<comment type="sequence caution" evidence="2">
    <conflict type="erroneous initiation">
        <sequence resource="EMBL-CDS" id="AAN82437"/>
    </conflict>
</comment>
<gene>
    <name evidence="1" type="primary">aaeX</name>
    <name type="ordered locus">c3997</name>
</gene>
<organism>
    <name type="scientific">Escherichia coli O6:H1 (strain CFT073 / ATCC 700928 / UPEC)</name>
    <dbReference type="NCBI Taxonomy" id="199310"/>
    <lineage>
        <taxon>Bacteria</taxon>
        <taxon>Pseudomonadati</taxon>
        <taxon>Pseudomonadota</taxon>
        <taxon>Gammaproteobacteria</taxon>
        <taxon>Enterobacterales</taxon>
        <taxon>Enterobacteriaceae</taxon>
        <taxon>Escherichia</taxon>
    </lineage>
</organism>
<name>AAEX_ECOL6</name>
<dbReference type="EMBL" id="AE014075">
    <property type="protein sequence ID" value="AAN82437.1"/>
    <property type="status" value="ALT_INIT"/>
    <property type="molecule type" value="Genomic_DNA"/>
</dbReference>
<dbReference type="RefSeq" id="WP_000051841.1">
    <property type="nucleotide sequence ID" value="NZ_CP051263.1"/>
</dbReference>
<dbReference type="STRING" id="199310.c3997"/>
<dbReference type="GeneID" id="93778743"/>
<dbReference type="KEGG" id="ecc:c3997"/>
<dbReference type="eggNOG" id="ENOG5032YJX">
    <property type="taxonomic scope" value="Bacteria"/>
</dbReference>
<dbReference type="HOGENOM" id="CLU_188292_0_0_6"/>
<dbReference type="Proteomes" id="UP000001410">
    <property type="component" value="Chromosome"/>
</dbReference>
<dbReference type="GO" id="GO:0005886">
    <property type="term" value="C:plasma membrane"/>
    <property type="evidence" value="ECO:0007669"/>
    <property type="project" value="UniProtKB-SubCell"/>
</dbReference>
<dbReference type="HAMAP" id="MF_01546">
    <property type="entry name" value="AaeX"/>
    <property type="match status" value="1"/>
</dbReference>
<dbReference type="InterPro" id="IPR012451">
    <property type="entry name" value="DUF1656"/>
</dbReference>
<dbReference type="NCBIfam" id="NF008615">
    <property type="entry name" value="PRK11594.1"/>
    <property type="match status" value="1"/>
</dbReference>
<dbReference type="Pfam" id="PF07869">
    <property type="entry name" value="DUF1656"/>
    <property type="match status" value="1"/>
</dbReference>
<proteinExistence type="inferred from homology"/>